<evidence type="ECO:0000250" key="1"/>
<evidence type="ECO:0000305" key="2"/>
<comment type="function">
    <text evidence="1">Required for vesicular transport between the endoplasmic reticulum and the Golgi apparatus.</text>
</comment>
<comment type="subcellular location">
    <subcellularLocation>
        <location evidence="1">Membrane</location>
        <topology evidence="1">Peripheral membrane protein</topology>
    </subcellularLocation>
</comment>
<comment type="similarity">
    <text evidence="2">Belongs to the SNAP family.</text>
</comment>
<comment type="sequence caution" evidence="2">
    <conflict type="erroneous gene model prediction">
        <sequence resource="EMBL-CDS" id="AAB38331"/>
    </conflict>
</comment>
<proteinExistence type="inferred from homology"/>
<accession>P78603</accession>
<accession>A8N1D5</accession>
<sequence length="289" mass="32288">MAPKSAAQALFEKADKKANSSGGWFSSANSKWEEAGDLYQQAANAFKLEKQFKEAGDAFAREAECREKCKESLDAGNAWWNAAKAYKRGYPDLAIQALQQTIQHLVAGGRFRQAADREKEIAQIYLQETHDLSRACESFLRAGDWYAEEDATATANQCYKDAADLYAELEQFPQAITLYERVADHSLTSNLTKYSVKEYWLKSLLCTVALGDIVTARRNAQKYIGQDNTFVGTREFKFADALMEAVDAGDVGAYTAAVVEFDRITKLDNWKTAILLKIKRGIQEEPGLT</sequence>
<reference key="1">
    <citation type="journal article" date="1997" name="Curr. Genet.">
        <title>A temperature-sensitive mutation of Coprinus cinereus, hyt1-1, that causes swelling of hyphal tips.</title>
        <authorList>
            <person name="Maida S."/>
            <person name="Fujii M."/>
            <person name="Skrzynia C."/>
            <person name="Pukkila P.J."/>
            <person name="Kamada T."/>
        </authorList>
    </citation>
    <scope>NUCLEOTIDE SEQUENCE [GENOMIC DNA]</scope>
</reference>
<reference key="2">
    <citation type="journal article" date="2010" name="Proc. Natl. Acad. Sci. U.S.A.">
        <title>Insights into evolution of multicellular fungi from the assembled chromosomes of the mushroom Coprinopsis cinerea (Coprinus cinereus).</title>
        <authorList>
            <person name="Stajich J.E."/>
            <person name="Wilke S.K."/>
            <person name="Ahren D."/>
            <person name="Au C.H."/>
            <person name="Birren B.W."/>
            <person name="Borodovsky M."/>
            <person name="Burns C."/>
            <person name="Canbaeck B."/>
            <person name="Casselton L.A."/>
            <person name="Cheng C.K."/>
            <person name="Deng J."/>
            <person name="Dietrich F.S."/>
            <person name="Fargo D.C."/>
            <person name="Farman M.L."/>
            <person name="Gathman A.C."/>
            <person name="Goldberg J."/>
            <person name="Guigo R."/>
            <person name="Hoegger P.J."/>
            <person name="Hooker J.B."/>
            <person name="Huggins A."/>
            <person name="James T.Y."/>
            <person name="Kamada T."/>
            <person name="Kilaru S."/>
            <person name="Kodira C."/>
            <person name="Kuees U."/>
            <person name="Kupfer D."/>
            <person name="Kwan H.S."/>
            <person name="Lomsadze A."/>
            <person name="Li W."/>
            <person name="Lilly W.W."/>
            <person name="Ma L.-J."/>
            <person name="Mackey A.J."/>
            <person name="Manning G."/>
            <person name="Martin F."/>
            <person name="Muraguchi H."/>
            <person name="Natvig D.O."/>
            <person name="Palmerini H."/>
            <person name="Ramesh M.A."/>
            <person name="Rehmeyer C.J."/>
            <person name="Roe B.A."/>
            <person name="Shenoy N."/>
            <person name="Stanke M."/>
            <person name="Ter-Hovhannisyan V."/>
            <person name="Tunlid A."/>
            <person name="Velagapudi R."/>
            <person name="Vision T.J."/>
            <person name="Zeng Q."/>
            <person name="Zolan M.E."/>
            <person name="Pukkila P.J."/>
        </authorList>
    </citation>
    <scope>NUCLEOTIDE SEQUENCE [LARGE SCALE GENOMIC DNA]</scope>
    <source>
        <strain>Okayama-7 / 130 / ATCC MYA-4618 / FGSC 9003</strain>
    </source>
</reference>
<name>SEC17_COPC7</name>
<gene>
    <name type="primary">SEC17</name>
    <name type="synonym">LSE17</name>
    <name type="ORF">CC1G_12659</name>
</gene>
<dbReference type="EMBL" id="U79186">
    <property type="protein sequence ID" value="AAB38331.1"/>
    <property type="status" value="ALT_SEQ"/>
    <property type="molecule type" value="Genomic_DNA"/>
</dbReference>
<dbReference type="EMBL" id="AACS02000001">
    <property type="protein sequence ID" value="EAU93124.1"/>
    <property type="molecule type" value="Genomic_DNA"/>
</dbReference>
<dbReference type="RefSeq" id="XP_001828684.1">
    <property type="nucleotide sequence ID" value="XM_001828632.2"/>
</dbReference>
<dbReference type="SMR" id="P78603"/>
<dbReference type="FunCoup" id="P78603">
    <property type="interactions" value="334"/>
</dbReference>
<dbReference type="STRING" id="240176.P78603"/>
<dbReference type="GeneID" id="6005108"/>
<dbReference type="KEGG" id="cci:CC1G_12659"/>
<dbReference type="VEuPathDB" id="FungiDB:CC1G_12659"/>
<dbReference type="eggNOG" id="KOG1586">
    <property type="taxonomic scope" value="Eukaryota"/>
</dbReference>
<dbReference type="HOGENOM" id="CLU_046329_0_2_1"/>
<dbReference type="InParanoid" id="P78603"/>
<dbReference type="OMA" id="WSVKEYL"/>
<dbReference type="OrthoDB" id="9984275at2759"/>
<dbReference type="Proteomes" id="UP000001861">
    <property type="component" value="Unassembled WGS sequence"/>
</dbReference>
<dbReference type="GO" id="GO:0031201">
    <property type="term" value="C:SNARE complex"/>
    <property type="evidence" value="ECO:0007669"/>
    <property type="project" value="TreeGrafter"/>
</dbReference>
<dbReference type="GO" id="GO:0005774">
    <property type="term" value="C:vacuolar membrane"/>
    <property type="evidence" value="ECO:0007669"/>
    <property type="project" value="TreeGrafter"/>
</dbReference>
<dbReference type="GO" id="GO:0005483">
    <property type="term" value="F:soluble NSF attachment protein activity"/>
    <property type="evidence" value="ECO:0007669"/>
    <property type="project" value="TreeGrafter"/>
</dbReference>
<dbReference type="GO" id="GO:0019905">
    <property type="term" value="F:syntaxin binding"/>
    <property type="evidence" value="ECO:0007669"/>
    <property type="project" value="TreeGrafter"/>
</dbReference>
<dbReference type="GO" id="GO:0006886">
    <property type="term" value="P:intracellular protein transport"/>
    <property type="evidence" value="ECO:0007669"/>
    <property type="project" value="InterPro"/>
</dbReference>
<dbReference type="GO" id="GO:0035494">
    <property type="term" value="P:SNARE complex disassembly"/>
    <property type="evidence" value="ECO:0007669"/>
    <property type="project" value="TreeGrafter"/>
</dbReference>
<dbReference type="CDD" id="cd15832">
    <property type="entry name" value="SNAP"/>
    <property type="match status" value="1"/>
</dbReference>
<dbReference type="FunFam" id="1.25.40.10:FF:000049">
    <property type="entry name" value="Alpha-soluble NSF attachment protein-like"/>
    <property type="match status" value="1"/>
</dbReference>
<dbReference type="Gene3D" id="1.25.40.10">
    <property type="entry name" value="Tetratricopeptide repeat domain"/>
    <property type="match status" value="1"/>
</dbReference>
<dbReference type="InterPro" id="IPR000744">
    <property type="entry name" value="NSF_attach"/>
</dbReference>
<dbReference type="InterPro" id="IPR011990">
    <property type="entry name" value="TPR-like_helical_dom_sf"/>
</dbReference>
<dbReference type="PANTHER" id="PTHR13768:SF8">
    <property type="entry name" value="ALPHA-SOLUBLE NSF ATTACHMENT PROTEIN"/>
    <property type="match status" value="1"/>
</dbReference>
<dbReference type="PANTHER" id="PTHR13768">
    <property type="entry name" value="SOLUBLE NSF ATTACHMENT PROTEIN SNAP"/>
    <property type="match status" value="1"/>
</dbReference>
<dbReference type="Pfam" id="PF14938">
    <property type="entry name" value="SNAP"/>
    <property type="match status" value="1"/>
</dbReference>
<dbReference type="PRINTS" id="PR00448">
    <property type="entry name" value="NSFATTACHMNT"/>
</dbReference>
<dbReference type="SUPFAM" id="SSF48452">
    <property type="entry name" value="TPR-like"/>
    <property type="match status" value="1"/>
</dbReference>
<organism>
    <name type="scientific">Coprinopsis cinerea (strain Okayama-7 / 130 / ATCC MYA-4618 / FGSC 9003)</name>
    <name type="common">Inky cap fungus</name>
    <name type="synonym">Hormographiella aspergillata</name>
    <dbReference type="NCBI Taxonomy" id="240176"/>
    <lineage>
        <taxon>Eukaryota</taxon>
        <taxon>Fungi</taxon>
        <taxon>Dikarya</taxon>
        <taxon>Basidiomycota</taxon>
        <taxon>Agaricomycotina</taxon>
        <taxon>Agaricomycetes</taxon>
        <taxon>Agaricomycetidae</taxon>
        <taxon>Agaricales</taxon>
        <taxon>Agaricineae</taxon>
        <taxon>Psathyrellaceae</taxon>
        <taxon>Coprinopsis</taxon>
    </lineage>
</organism>
<keyword id="KW-0931">ER-Golgi transport</keyword>
<keyword id="KW-0472">Membrane</keyword>
<keyword id="KW-0653">Protein transport</keyword>
<keyword id="KW-1185">Reference proteome</keyword>
<keyword id="KW-0813">Transport</keyword>
<feature type="chain" id="PRO_0000219072" description="Vesicular-fusion protein SEC17">
    <location>
        <begin position="1"/>
        <end position="289"/>
    </location>
</feature>
<protein>
    <recommendedName>
        <fullName>Vesicular-fusion protein SEC17</fullName>
    </recommendedName>
</protein>